<protein>
    <recommendedName>
        <fullName evidence="1">DNA-directed RNA polymerase subunit Rpo10</fullName>
        <ecNumber evidence="1">2.7.7.6</ecNumber>
    </recommendedName>
    <alternativeName>
        <fullName evidence="1">DNA-directed RNA polymerase subunit N</fullName>
    </alternativeName>
</protein>
<accession>A9A9Y7</accession>
<dbReference type="EC" id="2.7.7.6" evidence="1"/>
<dbReference type="EMBL" id="CP000867">
    <property type="protein sequence ID" value="ABX02160.1"/>
    <property type="molecule type" value="Genomic_DNA"/>
</dbReference>
<dbReference type="SMR" id="A9A9Y7"/>
<dbReference type="STRING" id="444158.MmarC6_1347"/>
<dbReference type="KEGG" id="mmx:MmarC6_1347"/>
<dbReference type="eggNOG" id="arCOG04244">
    <property type="taxonomic scope" value="Archaea"/>
</dbReference>
<dbReference type="HOGENOM" id="CLU_143122_2_1_2"/>
<dbReference type="OrthoDB" id="371754at2157"/>
<dbReference type="PhylomeDB" id="A9A9Y7"/>
<dbReference type="GO" id="GO:0005737">
    <property type="term" value="C:cytoplasm"/>
    <property type="evidence" value="ECO:0007669"/>
    <property type="project" value="UniProtKB-SubCell"/>
</dbReference>
<dbReference type="GO" id="GO:0000428">
    <property type="term" value="C:DNA-directed RNA polymerase complex"/>
    <property type="evidence" value="ECO:0007669"/>
    <property type="project" value="UniProtKB-KW"/>
</dbReference>
<dbReference type="GO" id="GO:0003677">
    <property type="term" value="F:DNA binding"/>
    <property type="evidence" value="ECO:0007669"/>
    <property type="project" value="InterPro"/>
</dbReference>
<dbReference type="GO" id="GO:0003899">
    <property type="term" value="F:DNA-directed RNA polymerase activity"/>
    <property type="evidence" value="ECO:0007669"/>
    <property type="project" value="UniProtKB-UniRule"/>
</dbReference>
<dbReference type="GO" id="GO:0008270">
    <property type="term" value="F:zinc ion binding"/>
    <property type="evidence" value="ECO:0007669"/>
    <property type="project" value="UniProtKB-UniRule"/>
</dbReference>
<dbReference type="GO" id="GO:0006351">
    <property type="term" value="P:DNA-templated transcription"/>
    <property type="evidence" value="ECO:0007669"/>
    <property type="project" value="UniProtKB-UniRule"/>
</dbReference>
<dbReference type="Gene3D" id="1.10.10.60">
    <property type="entry name" value="Homeodomain-like"/>
    <property type="match status" value="1"/>
</dbReference>
<dbReference type="HAMAP" id="MF_00250">
    <property type="entry name" value="RNApol_arch_Rpo10"/>
    <property type="match status" value="1"/>
</dbReference>
<dbReference type="InterPro" id="IPR023580">
    <property type="entry name" value="RNA_pol_su_RPB10"/>
</dbReference>
<dbReference type="InterPro" id="IPR020789">
    <property type="entry name" value="RNA_pol_suN_Zn-BS"/>
</dbReference>
<dbReference type="InterPro" id="IPR000268">
    <property type="entry name" value="RPABC5/Rpb10"/>
</dbReference>
<dbReference type="NCBIfam" id="NF003089">
    <property type="entry name" value="PRK04016.1"/>
    <property type="match status" value="1"/>
</dbReference>
<dbReference type="PANTHER" id="PTHR23431:SF3">
    <property type="entry name" value="DNA-DIRECTED RNA POLYMERASES I, II, AND III SUBUNIT RPABC5"/>
    <property type="match status" value="1"/>
</dbReference>
<dbReference type="PANTHER" id="PTHR23431">
    <property type="entry name" value="DNA-DIRECTED RNA POLYMERASES I, II, AND III SUBUNIT RPABC5 FAMILY MEMBER"/>
    <property type="match status" value="1"/>
</dbReference>
<dbReference type="Pfam" id="PF01194">
    <property type="entry name" value="RNA_pol_N"/>
    <property type="match status" value="1"/>
</dbReference>
<dbReference type="PIRSF" id="PIRSF005653">
    <property type="entry name" value="RNA_pol_N/8_sub"/>
    <property type="match status" value="1"/>
</dbReference>
<dbReference type="SUPFAM" id="SSF46924">
    <property type="entry name" value="RNA polymerase subunit RPB10"/>
    <property type="match status" value="1"/>
</dbReference>
<dbReference type="PROSITE" id="PS01112">
    <property type="entry name" value="RNA_POL_N_8KD"/>
    <property type="match status" value="1"/>
</dbReference>
<name>RPO10_METM6</name>
<keyword id="KW-0963">Cytoplasm</keyword>
<keyword id="KW-0240">DNA-directed RNA polymerase</keyword>
<keyword id="KW-0479">Metal-binding</keyword>
<keyword id="KW-0548">Nucleotidyltransferase</keyword>
<keyword id="KW-0804">Transcription</keyword>
<keyword id="KW-0808">Transferase</keyword>
<keyword id="KW-0862">Zinc</keyword>
<feature type="chain" id="PRO_1000100989" description="DNA-directed RNA polymerase subunit Rpo10">
    <location>
        <begin position="1"/>
        <end position="68"/>
    </location>
</feature>
<feature type="binding site" evidence="1">
    <location>
        <position position="7"/>
    </location>
    <ligand>
        <name>Zn(2+)</name>
        <dbReference type="ChEBI" id="CHEBI:29105"/>
    </ligand>
</feature>
<feature type="binding site" evidence="1">
    <location>
        <position position="10"/>
    </location>
    <ligand>
        <name>Zn(2+)</name>
        <dbReference type="ChEBI" id="CHEBI:29105"/>
    </ligand>
</feature>
<feature type="binding site" evidence="1">
    <location>
        <position position="44"/>
    </location>
    <ligand>
        <name>Zn(2+)</name>
        <dbReference type="ChEBI" id="CHEBI:29105"/>
    </ligand>
</feature>
<feature type="binding site" evidence="1">
    <location>
        <position position="45"/>
    </location>
    <ligand>
        <name>Zn(2+)</name>
        <dbReference type="ChEBI" id="CHEBI:29105"/>
    </ligand>
</feature>
<organism>
    <name type="scientific">Methanococcus maripaludis (strain C6 / ATCC BAA-1332)</name>
    <dbReference type="NCBI Taxonomy" id="444158"/>
    <lineage>
        <taxon>Archaea</taxon>
        <taxon>Methanobacteriati</taxon>
        <taxon>Methanobacteriota</taxon>
        <taxon>Methanomada group</taxon>
        <taxon>Methanococci</taxon>
        <taxon>Methanococcales</taxon>
        <taxon>Methanococcaceae</taxon>
        <taxon>Methanococcus</taxon>
    </lineage>
</organism>
<evidence type="ECO:0000255" key="1">
    <source>
        <dbReference type="HAMAP-Rule" id="MF_00250"/>
    </source>
</evidence>
<proteinExistence type="inferred from homology"/>
<comment type="function">
    <text evidence="1">DNA-dependent RNA polymerase (RNAP) catalyzes the transcription of DNA into RNA using the four ribonucleoside triphosphates as substrates.</text>
</comment>
<comment type="catalytic activity">
    <reaction evidence="1">
        <text>RNA(n) + a ribonucleoside 5'-triphosphate = RNA(n+1) + diphosphate</text>
        <dbReference type="Rhea" id="RHEA:21248"/>
        <dbReference type="Rhea" id="RHEA-COMP:14527"/>
        <dbReference type="Rhea" id="RHEA-COMP:17342"/>
        <dbReference type="ChEBI" id="CHEBI:33019"/>
        <dbReference type="ChEBI" id="CHEBI:61557"/>
        <dbReference type="ChEBI" id="CHEBI:140395"/>
        <dbReference type="EC" id="2.7.7.6"/>
    </reaction>
</comment>
<comment type="cofactor">
    <cofactor evidence="1">
        <name>Zn(2+)</name>
        <dbReference type="ChEBI" id="CHEBI:29105"/>
    </cofactor>
    <text evidence="1">Binds 1 zinc ion.</text>
</comment>
<comment type="subunit">
    <text evidence="1">Part of the RNA polymerase complex.</text>
</comment>
<comment type="subcellular location">
    <subcellularLocation>
        <location evidence="1">Cytoplasm</location>
    </subcellularLocation>
</comment>
<comment type="similarity">
    <text evidence="1">Belongs to the archaeal Rpo10/eukaryotic RPB10 RNA polymerase subunit family.</text>
</comment>
<reference key="1">
    <citation type="submission" date="2007-10" db="EMBL/GenBank/DDBJ databases">
        <title>Complete sequence of Methanococcus maripaludis C6.</title>
        <authorList>
            <consortium name="US DOE Joint Genome Institute"/>
            <person name="Copeland A."/>
            <person name="Lucas S."/>
            <person name="Lapidus A."/>
            <person name="Barry K."/>
            <person name="Glavina del Rio T."/>
            <person name="Dalin E."/>
            <person name="Tice H."/>
            <person name="Pitluck S."/>
            <person name="Clum A."/>
            <person name="Schmutz J."/>
            <person name="Larimer F."/>
            <person name="Land M."/>
            <person name="Hauser L."/>
            <person name="Kyrpides N."/>
            <person name="Mikhailova N."/>
            <person name="Sieprawska-Lupa M."/>
            <person name="Whitman W.B."/>
            <person name="Richardson P."/>
        </authorList>
    </citation>
    <scope>NUCLEOTIDE SEQUENCE [LARGE SCALE GENOMIC DNA]</scope>
    <source>
        <strain>C6 / ATCC BAA-1332</strain>
    </source>
</reference>
<sequence length="68" mass="8226">MIFPIRCFSCGAVISEVYEEYRNRLKDGENPEEILNDLEVKKYCCRRMFASHRLDNDRELFDDIVEYK</sequence>
<gene>
    <name evidence="1" type="primary">rpo10</name>
    <name evidence="1" type="synonym">rpoN</name>
    <name type="ordered locus">MmarC6_1347</name>
</gene>